<name>HCYA_SCUCO</name>
<proteinExistence type="evidence at protein level"/>
<dbReference type="EMBL" id="AJ344359">
    <property type="protein sequence ID" value="CAC69246.1"/>
    <property type="molecule type" value="mRNA"/>
</dbReference>
<dbReference type="SMR" id="Q95P08"/>
<dbReference type="GlyCosmos" id="Q95P08">
    <property type="glycosylation" value="1 site, No reported glycans"/>
</dbReference>
<dbReference type="GO" id="GO:0005576">
    <property type="term" value="C:extracellular region"/>
    <property type="evidence" value="ECO:0000314"/>
    <property type="project" value="UniProtKB"/>
</dbReference>
<dbReference type="GO" id="GO:0046872">
    <property type="term" value="F:metal ion binding"/>
    <property type="evidence" value="ECO:0007669"/>
    <property type="project" value="UniProtKB-KW"/>
</dbReference>
<dbReference type="GO" id="GO:0016491">
    <property type="term" value="F:oxidoreductase activity"/>
    <property type="evidence" value="ECO:0007669"/>
    <property type="project" value="InterPro"/>
</dbReference>
<dbReference type="GO" id="GO:0005344">
    <property type="term" value="F:oxygen carrier activity"/>
    <property type="evidence" value="ECO:0007669"/>
    <property type="project" value="UniProtKB-KW"/>
</dbReference>
<dbReference type="FunFam" id="1.10.1280.10:FF:000004">
    <property type="entry name" value="Hemocyanin subunit 2"/>
    <property type="match status" value="1"/>
</dbReference>
<dbReference type="FunFam" id="2.60.40.1520:FF:000001">
    <property type="entry name" value="Hemocyanin subunit 2"/>
    <property type="match status" value="1"/>
</dbReference>
<dbReference type="Gene3D" id="1.10.1280.10">
    <property type="entry name" value="Di-copper center containing domain from catechol oxidase"/>
    <property type="match status" value="1"/>
</dbReference>
<dbReference type="Gene3D" id="2.60.40.1520">
    <property type="entry name" value="Hemocyanin, C-terminal domain"/>
    <property type="match status" value="1"/>
</dbReference>
<dbReference type="Gene3D" id="1.20.1370.10">
    <property type="entry name" value="Hemocyanin, N-terminal domain"/>
    <property type="match status" value="1"/>
</dbReference>
<dbReference type="InterPro" id="IPR008922">
    <property type="entry name" value="Di-copper_centre_dom_sf"/>
</dbReference>
<dbReference type="InterPro" id="IPR013788">
    <property type="entry name" value="Hemocyanin/hexamerin"/>
</dbReference>
<dbReference type="InterPro" id="IPR000896">
    <property type="entry name" value="Hemocyanin/hexamerin_mid_dom"/>
</dbReference>
<dbReference type="InterPro" id="IPR005203">
    <property type="entry name" value="Hemocyanin_C"/>
</dbReference>
<dbReference type="InterPro" id="IPR037020">
    <property type="entry name" value="Hemocyanin_C_sf"/>
</dbReference>
<dbReference type="InterPro" id="IPR005204">
    <property type="entry name" value="Hemocyanin_N"/>
</dbReference>
<dbReference type="InterPro" id="IPR036697">
    <property type="entry name" value="Hemocyanin_N_sf"/>
</dbReference>
<dbReference type="InterPro" id="IPR014756">
    <property type="entry name" value="Ig_E-set"/>
</dbReference>
<dbReference type="InterPro" id="IPR002227">
    <property type="entry name" value="Tyrosinase_Cu-bd"/>
</dbReference>
<dbReference type="PANTHER" id="PTHR11511:SF5">
    <property type="entry name" value="FAT-BODY PROTEIN 1-RELATED"/>
    <property type="match status" value="1"/>
</dbReference>
<dbReference type="PANTHER" id="PTHR11511">
    <property type="entry name" value="LARVAL STORAGE PROTEIN/PHENOLOXIDASE"/>
    <property type="match status" value="1"/>
</dbReference>
<dbReference type="Pfam" id="PF03723">
    <property type="entry name" value="Hemocyanin_C"/>
    <property type="match status" value="1"/>
</dbReference>
<dbReference type="Pfam" id="PF00372">
    <property type="entry name" value="Hemocyanin_M"/>
    <property type="match status" value="1"/>
</dbReference>
<dbReference type="Pfam" id="PF03722">
    <property type="entry name" value="Hemocyanin_N"/>
    <property type="match status" value="1"/>
</dbReference>
<dbReference type="PRINTS" id="PR00187">
    <property type="entry name" value="HAEMOCYANIN"/>
</dbReference>
<dbReference type="SUPFAM" id="SSF48056">
    <property type="entry name" value="Di-copper centre-containing domain"/>
    <property type="match status" value="1"/>
</dbReference>
<dbReference type="SUPFAM" id="SSF81296">
    <property type="entry name" value="E set domains"/>
    <property type="match status" value="1"/>
</dbReference>
<dbReference type="SUPFAM" id="SSF48050">
    <property type="entry name" value="Hemocyanin, N-terminal domain"/>
    <property type="match status" value="1"/>
</dbReference>
<dbReference type="PROSITE" id="PS00209">
    <property type="entry name" value="HEMOCYANIN_1"/>
    <property type="match status" value="1"/>
</dbReference>
<dbReference type="PROSITE" id="PS00210">
    <property type="entry name" value="HEMOCYANIN_2"/>
    <property type="match status" value="1"/>
</dbReference>
<dbReference type="PROSITE" id="PS00498">
    <property type="entry name" value="TYROSINASE_2"/>
    <property type="match status" value="1"/>
</dbReference>
<reference evidence="3" key="1">
    <citation type="journal article" date="2003" name="Eur. J. Biochem.">
        <title>Complete subunit sequences, structure and evolution of the 6 x 6-mer hemocyanin from the common house centipede, Scutigera coleoptrata.</title>
        <authorList>
            <person name="Kusche K."/>
            <person name="Hembach A."/>
            <person name="Hagner-Holler S."/>
            <person name="Gebauer W."/>
            <person name="Burmester T."/>
        </authorList>
    </citation>
    <scope>NUCLEOTIDE SEQUENCE [MRNA]</scope>
    <scope>PROTEIN SEQUENCE OF 19-36</scope>
    <scope>SUBUNIT</scope>
    <scope>SUBCELLULAR LOCATION</scope>
    <scope>TISSUE SPECIFICITY</scope>
    <source>
        <tissue evidence="2">Hemolymph</tissue>
    </source>
</reference>
<comment type="function">
    <text evidence="3">Hemocyanins are copper-containing oxygen carriers occurring freely dissolved in the hemolymph of many mollusks and arthropods.</text>
</comment>
<comment type="subunit">
    <text evidence="2">36-chain polymer consisting of 6 hexamers, each of which includes 4 different chains, A, B, C and D.</text>
</comment>
<comment type="subcellular location">
    <subcellularLocation>
        <location evidence="2">Secreted</location>
        <location evidence="2">Extracellular space</location>
    </subcellularLocation>
</comment>
<comment type="tissue specificity">
    <text evidence="2">Hemolymph.</text>
</comment>
<comment type="similarity">
    <text evidence="3">Belongs to the tyrosinase family. Hemocyanin subfamily.</text>
</comment>
<comment type="caution">
    <text evidence="3">PubMed:12823556 conflicts between the peptide sequence obtained by Edman degradation and that obtained from the cDNA sequence may be due to contamination of the peptide sample with hemocyanin C.</text>
</comment>
<accession>Q95P08</accession>
<sequence>MWSLALATLFVLGTVIRADQCPPVPADTKDKLEKILELIGHVNRPLTPETPEPAGYDETKLKGLGILPQHEIFSLFDERTWPEATKAAEFLMEATDFEHFIQRADVLRHRINEDMFMYALNVAVLHRKDTRGVQVPRIHKIYPDKFLKQDILVEVREKVNHGEEKPVVDATELHQNQLDPNYRLSYFLEDIGMNSHHYHWHVVHPAVWLPKHGPRKDRKGELFYYMHHQMVARYDSERLSNNLPRTEPFENWDDPLEEGYAPHLTIHKTGYNYMFRPEGLIVRDLPELNKNKMRQWKSRILHGIHLNVLYAENGTKISLDNEHGIDLLGDAIESSLLSVNRAFYGNIHCYAHVMAARIADPDGRYGEDNGVMHDVATSARDPLFYRWHKFIDNIFLEYKDNLDPYTQYELTWPDVVLNDVTVKPHKGDYDDEVHTYWEVDNYELGKGFDYTRKTTATVKVRHLQHEDYHYEIDIDNNAGKAKKAVFRIFLAPKYNEKGELFPVNEQRQLLVELDKFVATLEPGHNVIERQSKESSVTMSKDHVFGEIRNLADDHQCSCGWPDYLLLPKGKYEGMTYQLFVVATDYEEDHVEDAGEECQCRDSMSYCGSVEHKLPDNKPLGYPFDRRIDGTGFEEFKTQNMYYGDVVIQFTGETVTH</sequence>
<protein>
    <recommendedName>
        <fullName>Hemocyanin subunit A</fullName>
    </recommendedName>
</protein>
<evidence type="ECO:0000250" key="1">
    <source>
        <dbReference type="UniProtKB" id="P10787"/>
    </source>
</evidence>
<evidence type="ECO:0000269" key="2">
    <source>
    </source>
</evidence>
<evidence type="ECO:0000305" key="3"/>
<evidence type="ECO:0000312" key="4">
    <source>
        <dbReference type="EMBL" id="CAC69246.1"/>
    </source>
</evidence>
<organism evidence="4">
    <name type="scientific">Scutigera coleoptrata</name>
    <name type="common">House centipede</name>
    <dbReference type="NCBI Taxonomy" id="29022"/>
    <lineage>
        <taxon>Eukaryota</taxon>
        <taxon>Metazoa</taxon>
        <taxon>Ecdysozoa</taxon>
        <taxon>Arthropoda</taxon>
        <taxon>Myriapoda</taxon>
        <taxon>Chilopoda</taxon>
        <taxon>Notostigmophora</taxon>
        <taxon>Scutigeromorpha</taxon>
        <taxon>Scutigeridae</taxon>
        <taxon>Scutigera</taxon>
    </lineage>
</organism>
<keyword id="KW-0186">Copper</keyword>
<keyword id="KW-0903">Direct protein sequencing</keyword>
<keyword id="KW-1015">Disulfide bond</keyword>
<keyword id="KW-0325">Glycoprotein</keyword>
<keyword id="KW-0479">Metal-binding</keyword>
<keyword id="KW-0561">Oxygen transport</keyword>
<keyword id="KW-0964">Secreted</keyword>
<keyword id="KW-0732">Signal</keyword>
<keyword id="KW-0813">Transport</keyword>
<gene>
    <name type="primary">HCA</name>
    <name type="synonym">HC1</name>
</gene>
<feature type="signal peptide" evidence="2">
    <location>
        <begin position="1"/>
        <end position="18"/>
    </location>
</feature>
<feature type="chain" id="PRO_0000013345" description="Hemocyanin subunit A">
    <location>
        <begin position="19"/>
        <end position="656"/>
    </location>
</feature>
<feature type="binding site" evidence="1">
    <location>
        <position position="197"/>
    </location>
    <ligand>
        <name>Cu cation</name>
        <dbReference type="ChEBI" id="CHEBI:23378"/>
        <label>A</label>
    </ligand>
</feature>
<feature type="binding site" evidence="1">
    <location>
        <position position="201"/>
    </location>
    <ligand>
        <name>Cu cation</name>
        <dbReference type="ChEBI" id="CHEBI:23378"/>
        <label>A</label>
    </ligand>
</feature>
<feature type="binding site" evidence="1">
    <location>
        <position position="227"/>
    </location>
    <ligand>
        <name>Cu cation</name>
        <dbReference type="ChEBI" id="CHEBI:23378"/>
        <label>A</label>
    </ligand>
</feature>
<feature type="binding site" evidence="1">
    <location>
        <position position="348"/>
    </location>
    <ligand>
        <name>Cu cation</name>
        <dbReference type="ChEBI" id="CHEBI:23378"/>
        <label>B</label>
    </ligand>
</feature>
<feature type="binding site" evidence="1">
    <location>
        <position position="352"/>
    </location>
    <ligand>
        <name>Cu cation</name>
        <dbReference type="ChEBI" id="CHEBI:23378"/>
        <label>B</label>
    </ligand>
</feature>
<feature type="binding site" evidence="1">
    <location>
        <position position="388"/>
    </location>
    <ligand>
        <name>Cu cation</name>
        <dbReference type="ChEBI" id="CHEBI:23378"/>
        <label>B</label>
    </ligand>
</feature>
<feature type="glycosylation site" description="N-linked (GlcNAc...) asparagine" evidence="3">
    <location>
        <position position="313"/>
    </location>
</feature>
<feature type="disulfide bond" evidence="1">
    <location>
        <begin position="558"/>
        <end position="606"/>
    </location>
</feature>
<feature type="sequence conflict" description="In Ref. 1; AA sequence." evidence="3" ref="1">
    <original>C</original>
    <variation>E</variation>
    <location>
        <position position="21"/>
    </location>
</feature>
<feature type="sequence conflict" description="In Ref. 1; AA sequence." evidence="3" ref="1">
    <original>P</original>
    <variation>A</variation>
    <location>
        <position position="23"/>
    </location>
</feature>